<name>APT_BLOFL</name>
<proteinExistence type="inferred from homology"/>
<comment type="function">
    <text evidence="1">Catalyzes a salvage reaction resulting in the formation of AMP, that is energically less costly than de novo synthesis.</text>
</comment>
<comment type="catalytic activity">
    <reaction evidence="1">
        <text>AMP + diphosphate = 5-phospho-alpha-D-ribose 1-diphosphate + adenine</text>
        <dbReference type="Rhea" id="RHEA:16609"/>
        <dbReference type="ChEBI" id="CHEBI:16708"/>
        <dbReference type="ChEBI" id="CHEBI:33019"/>
        <dbReference type="ChEBI" id="CHEBI:58017"/>
        <dbReference type="ChEBI" id="CHEBI:456215"/>
        <dbReference type="EC" id="2.4.2.7"/>
    </reaction>
</comment>
<comment type="pathway">
    <text evidence="1">Purine metabolism; AMP biosynthesis via salvage pathway; AMP from adenine: step 1/1.</text>
</comment>
<comment type="subunit">
    <text evidence="1">Homodimer.</text>
</comment>
<comment type="subcellular location">
    <subcellularLocation>
        <location evidence="1">Cytoplasm</location>
    </subcellularLocation>
</comment>
<comment type="similarity">
    <text evidence="1">Belongs to the purine/pyrimidine phosphoribosyltransferase family.</text>
</comment>
<evidence type="ECO:0000255" key="1">
    <source>
        <dbReference type="HAMAP-Rule" id="MF_00004"/>
    </source>
</evidence>
<dbReference type="EC" id="2.4.2.7" evidence="1"/>
<dbReference type="EMBL" id="BX248583">
    <property type="protein sequence ID" value="CAD83371.1"/>
    <property type="molecule type" value="Genomic_DNA"/>
</dbReference>
<dbReference type="SMR" id="Q7VRB8"/>
<dbReference type="STRING" id="203907.Bfl300"/>
<dbReference type="KEGG" id="bfl:Bfl300"/>
<dbReference type="eggNOG" id="COG0503">
    <property type="taxonomic scope" value="Bacteria"/>
</dbReference>
<dbReference type="HOGENOM" id="CLU_063339_3_0_6"/>
<dbReference type="OrthoDB" id="9803963at2"/>
<dbReference type="UniPathway" id="UPA00588">
    <property type="reaction ID" value="UER00646"/>
</dbReference>
<dbReference type="Proteomes" id="UP000002192">
    <property type="component" value="Chromosome"/>
</dbReference>
<dbReference type="GO" id="GO:0005829">
    <property type="term" value="C:cytosol"/>
    <property type="evidence" value="ECO:0007669"/>
    <property type="project" value="TreeGrafter"/>
</dbReference>
<dbReference type="GO" id="GO:0003999">
    <property type="term" value="F:adenine phosphoribosyltransferase activity"/>
    <property type="evidence" value="ECO:0007669"/>
    <property type="project" value="UniProtKB-UniRule"/>
</dbReference>
<dbReference type="GO" id="GO:0006168">
    <property type="term" value="P:adenine salvage"/>
    <property type="evidence" value="ECO:0007669"/>
    <property type="project" value="InterPro"/>
</dbReference>
<dbReference type="GO" id="GO:0044209">
    <property type="term" value="P:AMP salvage"/>
    <property type="evidence" value="ECO:0007669"/>
    <property type="project" value="UniProtKB-UniRule"/>
</dbReference>
<dbReference type="GO" id="GO:0006166">
    <property type="term" value="P:purine ribonucleoside salvage"/>
    <property type="evidence" value="ECO:0007669"/>
    <property type="project" value="UniProtKB-KW"/>
</dbReference>
<dbReference type="CDD" id="cd06223">
    <property type="entry name" value="PRTases_typeI"/>
    <property type="match status" value="1"/>
</dbReference>
<dbReference type="FunFam" id="3.40.50.2020:FF:000004">
    <property type="entry name" value="Adenine phosphoribosyltransferase"/>
    <property type="match status" value="1"/>
</dbReference>
<dbReference type="Gene3D" id="3.40.50.2020">
    <property type="match status" value="1"/>
</dbReference>
<dbReference type="HAMAP" id="MF_00004">
    <property type="entry name" value="Aden_phosphoribosyltr"/>
    <property type="match status" value="1"/>
</dbReference>
<dbReference type="InterPro" id="IPR005764">
    <property type="entry name" value="Ade_phspho_trans"/>
</dbReference>
<dbReference type="InterPro" id="IPR050120">
    <property type="entry name" value="Adenine_PRTase"/>
</dbReference>
<dbReference type="InterPro" id="IPR000836">
    <property type="entry name" value="PRibTrfase_dom"/>
</dbReference>
<dbReference type="InterPro" id="IPR029057">
    <property type="entry name" value="PRTase-like"/>
</dbReference>
<dbReference type="NCBIfam" id="TIGR01090">
    <property type="entry name" value="apt"/>
    <property type="match status" value="1"/>
</dbReference>
<dbReference type="NCBIfam" id="NF002632">
    <property type="entry name" value="PRK02304.1-1"/>
    <property type="match status" value="1"/>
</dbReference>
<dbReference type="NCBIfam" id="NF002634">
    <property type="entry name" value="PRK02304.1-3"/>
    <property type="match status" value="1"/>
</dbReference>
<dbReference type="NCBIfam" id="NF002636">
    <property type="entry name" value="PRK02304.1-5"/>
    <property type="match status" value="1"/>
</dbReference>
<dbReference type="PANTHER" id="PTHR11776">
    <property type="entry name" value="ADENINE PHOSPHORIBOSYLTRANSFERASE"/>
    <property type="match status" value="1"/>
</dbReference>
<dbReference type="PANTHER" id="PTHR11776:SF7">
    <property type="entry name" value="PHOSPHORIBOSYLTRANSFERASE DOMAIN-CONTAINING PROTEIN"/>
    <property type="match status" value="1"/>
</dbReference>
<dbReference type="Pfam" id="PF00156">
    <property type="entry name" value="Pribosyltran"/>
    <property type="match status" value="1"/>
</dbReference>
<dbReference type="SUPFAM" id="SSF53271">
    <property type="entry name" value="PRTase-like"/>
    <property type="match status" value="1"/>
</dbReference>
<dbReference type="PROSITE" id="PS00103">
    <property type="entry name" value="PUR_PYR_PR_TRANSFER"/>
    <property type="match status" value="1"/>
</dbReference>
<reference key="1">
    <citation type="journal article" date="2003" name="Proc. Natl. Acad. Sci. U.S.A.">
        <title>The genome sequence of Blochmannia floridanus: comparative analysis of reduced genomes.</title>
        <authorList>
            <person name="Gil R."/>
            <person name="Silva F.J."/>
            <person name="Zientz E."/>
            <person name="Delmotte F."/>
            <person name="Gonzalez-Candelas F."/>
            <person name="Latorre A."/>
            <person name="Rausell C."/>
            <person name="Kamerbeek J."/>
            <person name="Gadau J."/>
            <person name="Hoelldobler B."/>
            <person name="van Ham R.C.H.J."/>
            <person name="Gross R."/>
            <person name="Moya A."/>
        </authorList>
    </citation>
    <scope>NUCLEOTIDE SEQUENCE [LARGE SCALE GENOMIC DNA]</scope>
</reference>
<accession>Q7VRB8</accession>
<protein>
    <recommendedName>
        <fullName evidence="1">Adenine phosphoribosyltransferase</fullName>
        <shortName evidence="1">APRT</shortName>
        <ecNumber evidence="1">2.4.2.7</ecNumber>
    </recommendedName>
</protein>
<feature type="chain" id="PRO_0000149370" description="Adenine phosphoribosyltransferase">
    <location>
        <begin position="1"/>
        <end position="183"/>
    </location>
</feature>
<keyword id="KW-0963">Cytoplasm</keyword>
<keyword id="KW-0328">Glycosyltransferase</keyword>
<keyword id="KW-0660">Purine salvage</keyword>
<keyword id="KW-1185">Reference proteome</keyword>
<keyword id="KW-0808">Transferase</keyword>
<organism>
    <name type="scientific">Blochmanniella floridana</name>
    <dbReference type="NCBI Taxonomy" id="203907"/>
    <lineage>
        <taxon>Bacteria</taxon>
        <taxon>Pseudomonadati</taxon>
        <taxon>Pseudomonadota</taxon>
        <taxon>Gammaproteobacteria</taxon>
        <taxon>Enterobacterales</taxon>
        <taxon>Enterobacteriaceae</taxon>
        <taxon>ant endosymbionts</taxon>
        <taxon>Candidatus Blochmanniella</taxon>
    </lineage>
</organism>
<sequence length="183" mass="20283">MISHTDHQLTLIKENIKFIPNYPKQGILFRDITALLENPHAYSACIKLLADHYKNHQLTKIVGVEARGFLFGSPLALILKLGFIPARKAGRLPRNTISESYVLEYGTGCLEMHNDSIIPGDRVLIVDDLLATGGTIKAVVKLIRRLGGEVYHAAFVIDLEKLGGKLLLEKIGVHPYSLVIFSD</sequence>
<gene>
    <name evidence="1" type="primary">apt</name>
    <name type="ordered locus">Bfl300</name>
</gene>